<proteinExistence type="inferred from homology"/>
<protein>
    <recommendedName>
        <fullName evidence="1">Ribosomal RNA small subunit methyltransferase A</fullName>
        <ecNumber evidence="1">2.1.1.182</ecNumber>
    </recommendedName>
    <alternativeName>
        <fullName evidence="1">16S rRNA (adenine(1518)-N(6)/adenine(1519)-N(6))-dimethyltransferase</fullName>
    </alternativeName>
    <alternativeName>
        <fullName evidence="1">16S rRNA dimethyladenosine transferase</fullName>
    </alternativeName>
    <alternativeName>
        <fullName evidence="1">16S rRNA dimethylase</fullName>
    </alternativeName>
    <alternativeName>
        <fullName evidence="1">S-adenosylmethionine-6-N', N'-adenosyl(rRNA) dimethyltransferase</fullName>
    </alternativeName>
</protein>
<dbReference type="EC" id="2.1.1.182" evidence="1"/>
<dbReference type="EMBL" id="CP000029">
    <property type="protein sequence ID" value="AAW53476.1"/>
    <property type="molecule type" value="Genomic_DNA"/>
</dbReference>
<dbReference type="RefSeq" id="WP_001832224.1">
    <property type="nucleotide sequence ID" value="NC_002976.3"/>
</dbReference>
<dbReference type="SMR" id="Q5HRR2"/>
<dbReference type="STRING" id="176279.SERP0131"/>
<dbReference type="GeneID" id="50019596"/>
<dbReference type="KEGG" id="ser:SERP0131"/>
<dbReference type="eggNOG" id="COG0030">
    <property type="taxonomic scope" value="Bacteria"/>
</dbReference>
<dbReference type="HOGENOM" id="CLU_041220_0_0_9"/>
<dbReference type="Proteomes" id="UP000000531">
    <property type="component" value="Chromosome"/>
</dbReference>
<dbReference type="GO" id="GO:0005829">
    <property type="term" value="C:cytosol"/>
    <property type="evidence" value="ECO:0007669"/>
    <property type="project" value="TreeGrafter"/>
</dbReference>
<dbReference type="GO" id="GO:0052908">
    <property type="term" value="F:16S rRNA (adenine(1518)-N(6)/adenine(1519)-N(6))-dimethyltransferase activity"/>
    <property type="evidence" value="ECO:0007669"/>
    <property type="project" value="UniProtKB-EC"/>
</dbReference>
<dbReference type="GO" id="GO:0003723">
    <property type="term" value="F:RNA binding"/>
    <property type="evidence" value="ECO:0007669"/>
    <property type="project" value="UniProtKB-KW"/>
</dbReference>
<dbReference type="CDD" id="cd02440">
    <property type="entry name" value="AdoMet_MTases"/>
    <property type="match status" value="1"/>
</dbReference>
<dbReference type="FunFam" id="1.10.8.100:FF:000002">
    <property type="entry name" value="Ribosomal RNA small subunit methyltransferase A"/>
    <property type="match status" value="1"/>
</dbReference>
<dbReference type="FunFam" id="3.40.50.150:FF:000023">
    <property type="entry name" value="Ribosomal RNA small subunit methyltransferase A"/>
    <property type="match status" value="1"/>
</dbReference>
<dbReference type="Gene3D" id="1.10.8.100">
    <property type="entry name" value="Ribosomal RNA adenine dimethylase-like, domain 2"/>
    <property type="match status" value="1"/>
</dbReference>
<dbReference type="Gene3D" id="3.40.50.150">
    <property type="entry name" value="Vaccinia Virus protein VP39"/>
    <property type="match status" value="1"/>
</dbReference>
<dbReference type="HAMAP" id="MF_00607">
    <property type="entry name" value="16SrRNA_methyltr_A"/>
    <property type="match status" value="1"/>
</dbReference>
<dbReference type="InterPro" id="IPR001737">
    <property type="entry name" value="KsgA/Erm"/>
</dbReference>
<dbReference type="InterPro" id="IPR023165">
    <property type="entry name" value="rRNA_Ade_diMease-like_C"/>
</dbReference>
<dbReference type="InterPro" id="IPR020596">
    <property type="entry name" value="rRNA_Ade_Mease_Trfase_CS"/>
</dbReference>
<dbReference type="InterPro" id="IPR020598">
    <property type="entry name" value="rRNA_Ade_methylase_Trfase_N"/>
</dbReference>
<dbReference type="InterPro" id="IPR011530">
    <property type="entry name" value="rRNA_adenine_dimethylase"/>
</dbReference>
<dbReference type="InterPro" id="IPR029063">
    <property type="entry name" value="SAM-dependent_MTases_sf"/>
</dbReference>
<dbReference type="NCBIfam" id="TIGR00755">
    <property type="entry name" value="ksgA"/>
    <property type="match status" value="1"/>
</dbReference>
<dbReference type="PANTHER" id="PTHR11727">
    <property type="entry name" value="DIMETHYLADENOSINE TRANSFERASE"/>
    <property type="match status" value="1"/>
</dbReference>
<dbReference type="PANTHER" id="PTHR11727:SF7">
    <property type="entry name" value="DIMETHYLADENOSINE TRANSFERASE-RELATED"/>
    <property type="match status" value="1"/>
</dbReference>
<dbReference type="Pfam" id="PF00398">
    <property type="entry name" value="RrnaAD"/>
    <property type="match status" value="1"/>
</dbReference>
<dbReference type="SMART" id="SM00650">
    <property type="entry name" value="rADc"/>
    <property type="match status" value="1"/>
</dbReference>
<dbReference type="SUPFAM" id="SSF53335">
    <property type="entry name" value="S-adenosyl-L-methionine-dependent methyltransferases"/>
    <property type="match status" value="1"/>
</dbReference>
<dbReference type="PROSITE" id="PS01131">
    <property type="entry name" value="RRNA_A_DIMETH"/>
    <property type="match status" value="1"/>
</dbReference>
<dbReference type="PROSITE" id="PS51689">
    <property type="entry name" value="SAM_RNA_A_N6_MT"/>
    <property type="match status" value="1"/>
</dbReference>
<accession>Q5HRR2</accession>
<keyword id="KW-0963">Cytoplasm</keyword>
<keyword id="KW-0489">Methyltransferase</keyword>
<keyword id="KW-1185">Reference proteome</keyword>
<keyword id="KW-0694">RNA-binding</keyword>
<keyword id="KW-0698">rRNA processing</keyword>
<keyword id="KW-0949">S-adenosyl-L-methionine</keyword>
<keyword id="KW-0808">Transferase</keyword>
<name>RSMA_STAEQ</name>
<comment type="function">
    <text evidence="1">Specifically dimethylates two adjacent adenosines (A1518 and A1519) in the loop of a conserved hairpin near the 3'-end of 16S rRNA in the 30S particle. May play a critical role in biogenesis of 30S subunits.</text>
</comment>
<comment type="catalytic activity">
    <reaction evidence="1">
        <text>adenosine(1518)/adenosine(1519) in 16S rRNA + 4 S-adenosyl-L-methionine = N(6)-dimethyladenosine(1518)/N(6)-dimethyladenosine(1519) in 16S rRNA + 4 S-adenosyl-L-homocysteine + 4 H(+)</text>
        <dbReference type="Rhea" id="RHEA:19609"/>
        <dbReference type="Rhea" id="RHEA-COMP:10232"/>
        <dbReference type="Rhea" id="RHEA-COMP:10233"/>
        <dbReference type="ChEBI" id="CHEBI:15378"/>
        <dbReference type="ChEBI" id="CHEBI:57856"/>
        <dbReference type="ChEBI" id="CHEBI:59789"/>
        <dbReference type="ChEBI" id="CHEBI:74411"/>
        <dbReference type="ChEBI" id="CHEBI:74493"/>
        <dbReference type="EC" id="2.1.1.182"/>
    </reaction>
</comment>
<comment type="subcellular location">
    <subcellularLocation>
        <location evidence="1">Cytoplasm</location>
    </subcellularLocation>
</comment>
<comment type="similarity">
    <text evidence="1">Belongs to the class I-like SAM-binding methyltransferase superfamily. rRNA adenine N(6)-methyltransferase family. RsmA subfamily.</text>
</comment>
<feature type="chain" id="PRO_0000101610" description="Ribosomal RNA small subunit methyltransferase A">
    <location>
        <begin position="1"/>
        <end position="296"/>
    </location>
</feature>
<feature type="binding site" evidence="1">
    <location>
        <position position="30"/>
    </location>
    <ligand>
        <name>S-adenosyl-L-methionine</name>
        <dbReference type="ChEBI" id="CHEBI:59789"/>
    </ligand>
</feature>
<feature type="binding site" evidence="1">
    <location>
        <position position="32"/>
    </location>
    <ligand>
        <name>S-adenosyl-L-methionine</name>
        <dbReference type="ChEBI" id="CHEBI:59789"/>
    </ligand>
</feature>
<feature type="binding site" evidence="1">
    <location>
        <position position="57"/>
    </location>
    <ligand>
        <name>S-adenosyl-L-methionine</name>
        <dbReference type="ChEBI" id="CHEBI:59789"/>
    </ligand>
</feature>
<feature type="binding site" evidence="1">
    <location>
        <position position="78"/>
    </location>
    <ligand>
        <name>S-adenosyl-L-methionine</name>
        <dbReference type="ChEBI" id="CHEBI:59789"/>
    </ligand>
</feature>
<feature type="binding site" evidence="1">
    <location>
        <position position="103"/>
    </location>
    <ligand>
        <name>S-adenosyl-L-methionine</name>
        <dbReference type="ChEBI" id="CHEBI:59789"/>
    </ligand>
</feature>
<feature type="binding site" evidence="1">
    <location>
        <position position="128"/>
    </location>
    <ligand>
        <name>S-adenosyl-L-methionine</name>
        <dbReference type="ChEBI" id="CHEBI:59789"/>
    </ligand>
</feature>
<reference key="1">
    <citation type="journal article" date="2005" name="J. Bacteriol.">
        <title>Insights on evolution of virulence and resistance from the complete genome analysis of an early methicillin-resistant Staphylococcus aureus strain and a biofilm-producing methicillin-resistant Staphylococcus epidermidis strain.</title>
        <authorList>
            <person name="Gill S.R."/>
            <person name="Fouts D.E."/>
            <person name="Archer G.L."/>
            <person name="Mongodin E.F."/>
            <person name="DeBoy R.T."/>
            <person name="Ravel J."/>
            <person name="Paulsen I.T."/>
            <person name="Kolonay J.F."/>
            <person name="Brinkac L.M."/>
            <person name="Beanan M.J."/>
            <person name="Dodson R.J."/>
            <person name="Daugherty S.C."/>
            <person name="Madupu R."/>
            <person name="Angiuoli S.V."/>
            <person name="Durkin A.S."/>
            <person name="Haft D.H."/>
            <person name="Vamathevan J.J."/>
            <person name="Khouri H."/>
            <person name="Utterback T.R."/>
            <person name="Lee C."/>
            <person name="Dimitrov G."/>
            <person name="Jiang L."/>
            <person name="Qin H."/>
            <person name="Weidman J."/>
            <person name="Tran K."/>
            <person name="Kang K.H."/>
            <person name="Hance I.R."/>
            <person name="Nelson K.E."/>
            <person name="Fraser C.M."/>
        </authorList>
    </citation>
    <scope>NUCLEOTIDE SEQUENCE [LARGE SCALE GENOMIC DNA]</scope>
    <source>
        <strain>ATCC 35984 / DSM 28319 / BCRC 17069 / CCUG 31568 / BM 3577 / RP62A</strain>
    </source>
</reference>
<gene>
    <name evidence="1" type="primary">rsmA</name>
    <name evidence="1" type="synonym">ksgA</name>
    <name type="ordered locus">SERP0131</name>
</gene>
<organism>
    <name type="scientific">Staphylococcus epidermidis (strain ATCC 35984 / DSM 28319 / BCRC 17069 / CCUG 31568 / BM 3577 / RP62A)</name>
    <dbReference type="NCBI Taxonomy" id="176279"/>
    <lineage>
        <taxon>Bacteria</taxon>
        <taxon>Bacillati</taxon>
        <taxon>Bacillota</taxon>
        <taxon>Bacilli</taxon>
        <taxon>Bacillales</taxon>
        <taxon>Staphylococcaceae</taxon>
        <taxon>Staphylococcus</taxon>
    </lineage>
</organism>
<evidence type="ECO:0000255" key="1">
    <source>
        <dbReference type="HAMAP-Rule" id="MF_00607"/>
    </source>
</evidence>
<sequence length="296" mass="33494">MEYKDIATPSRTRALLDQYGFNFKKSLGQNFLIDVNIINKIIEASHIDCTTGVIEVGPGMGSLTEQLAKNAKKVMAFEIDQRLIPVLKDTLSPYDNVTIINEDILKADIAKAVDTHLQDCDKIMVVANLPYYITTPILLNLMQQDVPIDGFVVMMQKEVGERLNAQVGTKAYGSLSIVAQYYTETSKVLTVPKTVFMPPPNVDSIVVKLMQRQEPLVQVDDEEGFFKLAKAAFAQRRKTINNNYQNFFKDGKKNKETIRQWLESAGIDPKRRGETLTIQDFATLYEQKKKFSELTN</sequence>